<proteinExistence type="inferred from homology"/>
<accession>P47283</accession>
<accession>Q49463</accession>
<evidence type="ECO:0000250" key="1">
    <source>
        <dbReference type="UniProtKB" id="P43490"/>
    </source>
</evidence>
<evidence type="ECO:0000250" key="2">
    <source>
        <dbReference type="UniProtKB" id="Q6FDK2"/>
    </source>
</evidence>
<evidence type="ECO:0000305" key="3"/>
<name>NAMPT_MYCGE</name>
<dbReference type="EC" id="2.4.2.12" evidence="2"/>
<dbReference type="EMBL" id="L43967">
    <property type="protein sequence ID" value="AAC71253.1"/>
    <property type="molecule type" value="Genomic_DNA"/>
</dbReference>
<dbReference type="EMBL" id="U01814">
    <property type="protein sequence ID" value="AAD12352.1"/>
    <property type="molecule type" value="Genomic_DNA"/>
</dbReference>
<dbReference type="PIR" id="A64204">
    <property type="entry name" value="A64204"/>
</dbReference>
<dbReference type="SMR" id="P47283"/>
<dbReference type="STRING" id="243273.MG_037"/>
<dbReference type="KEGG" id="mge:MG_037"/>
<dbReference type="eggNOG" id="COG1488">
    <property type="taxonomic scope" value="Bacteria"/>
</dbReference>
<dbReference type="HOGENOM" id="CLU_012550_2_0_14"/>
<dbReference type="InParanoid" id="P47283"/>
<dbReference type="OrthoDB" id="394882at2"/>
<dbReference type="UniPathway" id="UPA00253">
    <property type="reaction ID" value="UER00890"/>
</dbReference>
<dbReference type="Proteomes" id="UP000000807">
    <property type="component" value="Chromosome"/>
</dbReference>
<dbReference type="GO" id="GO:0047280">
    <property type="term" value="F:nicotinamide phosphoribosyltransferase activity"/>
    <property type="evidence" value="ECO:0000318"/>
    <property type="project" value="GO_Central"/>
</dbReference>
<dbReference type="GO" id="GO:0009435">
    <property type="term" value="P:NAD biosynthetic process"/>
    <property type="evidence" value="ECO:0000318"/>
    <property type="project" value="GO_Central"/>
</dbReference>
<dbReference type="CDD" id="cd01569">
    <property type="entry name" value="PBEF_like"/>
    <property type="match status" value="1"/>
</dbReference>
<dbReference type="Gene3D" id="3.20.20.70">
    <property type="entry name" value="Aldolase class I"/>
    <property type="match status" value="1"/>
</dbReference>
<dbReference type="InterPro" id="IPR013785">
    <property type="entry name" value="Aldolase_TIM"/>
</dbReference>
<dbReference type="InterPro" id="IPR041525">
    <property type="entry name" value="N/Namide_PRibTrfase"/>
</dbReference>
<dbReference type="InterPro" id="IPR016471">
    <property type="entry name" value="Nicotinamide_PRibTrfase"/>
</dbReference>
<dbReference type="InterPro" id="IPR036068">
    <property type="entry name" value="Nicotinate_pribotase-like_C"/>
</dbReference>
<dbReference type="NCBIfam" id="NF006629">
    <property type="entry name" value="PRK09198.1"/>
    <property type="match status" value="1"/>
</dbReference>
<dbReference type="PANTHER" id="PTHR43816">
    <property type="entry name" value="NICOTINAMIDE PHOSPHORIBOSYLTRANSFERASE"/>
    <property type="match status" value="1"/>
</dbReference>
<dbReference type="PANTHER" id="PTHR43816:SF1">
    <property type="entry name" value="NICOTINAMIDE PHOSPHORIBOSYLTRANSFERASE"/>
    <property type="match status" value="1"/>
</dbReference>
<dbReference type="Pfam" id="PF04095">
    <property type="entry name" value="NAPRTase"/>
    <property type="match status" value="1"/>
</dbReference>
<dbReference type="PIRSF" id="PIRSF005943">
    <property type="entry name" value="NMPRT"/>
    <property type="match status" value="1"/>
</dbReference>
<dbReference type="SUPFAM" id="SSF51690">
    <property type="entry name" value="Nicotinate/Quinolinate PRTase C-terminal domain-like"/>
    <property type="match status" value="1"/>
</dbReference>
<protein>
    <recommendedName>
        <fullName evidence="2">Nicotinamide phosphoribosyltransferase</fullName>
        <shortName evidence="2">NAmPRTase</shortName>
        <shortName evidence="2">NMPRT</shortName>
        <shortName evidence="2">Nampt</shortName>
        <ecNumber evidence="2">2.4.2.12</ecNumber>
    </recommendedName>
</protein>
<sequence length="450" mass="51801">MMDKRTSEIEFHLKNLLACDAYKLSHRLMYPQDTQNLYSMLTARGVYGDFKEFVWNHDFAKEILLNVFNGFVNSVIEVKKNKLLAAALTDKLVSVFNDHELANEFTQHICHLASFLEKNKKMPLVAKIHESDQSLPFRTPLITIEGVENIPNNFVWLVNYFETVLLENIWLFQTASTVAKRIKSLLEKYAKETADETSFINFQCHDFSMRGMSSLQSALYVARAHLQYFTGSDTILGGDNSRSILASEHSVMCADGSKHELKTFQRLLEKFKDKKLSLVIDSYDMWNVLDNIIPRLKNLILMRGATLYLRADSGNYQTLICNPNYKKQDKSTWAMIDYLDHHFSSTINKKGYKVLNKKIGIIYGDGITYQKIEWILNCLKNHGYCSSNIIFGVGSSTYQNLNRDTLGFVYKLTAIKRNNRWIGVKKTPITDLSKSSKGGRYKTKRLITVY</sequence>
<reference key="1">
    <citation type="journal article" date="1995" name="Science">
        <title>The minimal gene complement of Mycoplasma genitalium.</title>
        <authorList>
            <person name="Fraser C.M."/>
            <person name="Gocayne J.D."/>
            <person name="White O."/>
            <person name="Adams M.D."/>
            <person name="Clayton R.A."/>
            <person name="Fleischmann R.D."/>
            <person name="Bult C.J."/>
            <person name="Kerlavage A.R."/>
            <person name="Sutton G.G."/>
            <person name="Kelley J.M."/>
            <person name="Fritchman J.L."/>
            <person name="Weidman J.F."/>
            <person name="Small K.V."/>
            <person name="Sandusky M."/>
            <person name="Fuhrmann J.L."/>
            <person name="Nguyen D.T."/>
            <person name="Utterback T.R."/>
            <person name="Saudek D.M."/>
            <person name="Phillips C.A."/>
            <person name="Merrick J.M."/>
            <person name="Tomb J.-F."/>
            <person name="Dougherty B.A."/>
            <person name="Bott K.F."/>
            <person name="Hu P.-C."/>
            <person name="Lucier T.S."/>
            <person name="Peterson S.N."/>
            <person name="Smith H.O."/>
            <person name="Hutchison C.A. III"/>
            <person name="Venter J.C."/>
        </authorList>
    </citation>
    <scope>NUCLEOTIDE SEQUENCE [LARGE SCALE GENOMIC DNA]</scope>
    <source>
        <strain>ATCC 33530 / DSM 19775 / NCTC 10195 / G37</strain>
    </source>
</reference>
<reference key="2">
    <citation type="journal article" date="1993" name="J. Bacteriol.">
        <title>A survey of the Mycoplasma genitalium genome by using random sequencing.</title>
        <authorList>
            <person name="Peterson S.N."/>
            <person name="Hu P.-C."/>
            <person name="Bott K.F."/>
            <person name="Hutchison C.A. III"/>
        </authorList>
    </citation>
    <scope>NUCLEOTIDE SEQUENCE [GENOMIC DNA] OF 52-166</scope>
    <source>
        <strain>ATCC 33530 / DSM 19775 / NCTC 10195 / G37</strain>
    </source>
</reference>
<comment type="function">
    <text evidence="2">Catalyzes the condensation of nicotinamide with 5-phosphoribosyl-1-pyrophosphate to yield nicotinamide mononucleotide, an intermediate in the biosynthesis of NAD.</text>
</comment>
<comment type="catalytic activity">
    <reaction evidence="2">
        <text>beta-nicotinamide D-ribonucleotide + diphosphate = 5-phospho-alpha-D-ribose 1-diphosphate + nicotinamide + H(+)</text>
        <dbReference type="Rhea" id="RHEA:16149"/>
        <dbReference type="ChEBI" id="CHEBI:14649"/>
        <dbReference type="ChEBI" id="CHEBI:15378"/>
        <dbReference type="ChEBI" id="CHEBI:17154"/>
        <dbReference type="ChEBI" id="CHEBI:33019"/>
        <dbReference type="ChEBI" id="CHEBI:58017"/>
        <dbReference type="EC" id="2.4.2.12"/>
    </reaction>
</comment>
<comment type="pathway">
    <text evidence="2">Cofactor biosynthesis; NAD(+) biosynthesis; nicotinamide D-ribonucleotide from 5-phospho-alpha-D-ribose 1-diphosphate and nicotinamide: step 1/1.</text>
</comment>
<comment type="similarity">
    <text evidence="3">Belongs to the NAPRTase family.</text>
</comment>
<organism>
    <name type="scientific">Mycoplasma genitalium (strain ATCC 33530 / DSM 19775 / NCTC 10195 / G37)</name>
    <name type="common">Mycoplasmoides genitalium</name>
    <dbReference type="NCBI Taxonomy" id="243273"/>
    <lineage>
        <taxon>Bacteria</taxon>
        <taxon>Bacillati</taxon>
        <taxon>Mycoplasmatota</taxon>
        <taxon>Mycoplasmoidales</taxon>
        <taxon>Mycoplasmoidaceae</taxon>
        <taxon>Mycoplasmoides</taxon>
    </lineage>
</organism>
<gene>
    <name type="ordered locus">MG037</name>
</gene>
<keyword id="KW-0328">Glycosyltransferase</keyword>
<keyword id="KW-0662">Pyridine nucleotide biosynthesis</keyword>
<keyword id="KW-1185">Reference proteome</keyword>
<keyword id="KW-0808">Transferase</keyword>
<feature type="chain" id="PRO_0000205859" description="Nicotinamide phosphoribosyltransferase">
    <location>
        <begin position="1"/>
        <end position="450"/>
    </location>
</feature>
<feature type="binding site" evidence="1">
    <location>
        <position position="210"/>
    </location>
    <ligand>
        <name>diphosphate</name>
        <dbReference type="ChEBI" id="CHEBI:33019"/>
    </ligand>
</feature>
<feature type="binding site" evidence="1">
    <location>
        <position position="233"/>
    </location>
    <ligand>
        <name>beta-nicotinamide D-ribonucleotide</name>
        <dbReference type="ChEBI" id="CHEBI:14649"/>
    </ligand>
</feature>
<feature type="binding site" evidence="1">
    <location>
        <position position="249"/>
    </location>
    <ligand>
        <name>diphosphate</name>
        <dbReference type="ChEBI" id="CHEBI:33019"/>
    </ligand>
</feature>
<feature type="binding site" evidence="1">
    <location>
        <begin position="310"/>
        <end position="312"/>
    </location>
    <ligand>
        <name>beta-nicotinamide D-ribonucleotide</name>
        <dbReference type="ChEBI" id="CHEBI:14649"/>
    </ligand>
</feature>
<feature type="binding site" evidence="1">
    <location>
        <position position="310"/>
    </location>
    <ligand>
        <name>diphosphate</name>
        <dbReference type="ChEBI" id="CHEBI:33019"/>
    </ligand>
</feature>
<feature type="binding site" evidence="1">
    <location>
        <begin position="364"/>
        <end position="365"/>
    </location>
    <ligand>
        <name>beta-nicotinamide D-ribonucleotide</name>
        <dbReference type="ChEBI" id="CHEBI:14649"/>
    </ligand>
</feature>
<feature type="binding site" evidence="1">
    <location>
        <position position="403"/>
    </location>
    <ligand>
        <name>beta-nicotinamide D-ribonucleotide</name>
        <dbReference type="ChEBI" id="CHEBI:14649"/>
    </ligand>
</feature>
<feature type="sequence conflict" description="In Ref. 2." evidence="3" ref="2">
    <original>EFVW</original>
    <variation>GVCL</variation>
    <location>
        <begin position="52"/>
        <end position="55"/>
    </location>
</feature>